<proteinExistence type="inferred from homology"/>
<evidence type="ECO:0000250" key="1">
    <source>
        <dbReference type="UniProtKB" id="B9EJA2"/>
    </source>
</evidence>
<evidence type="ECO:0000250" key="2">
    <source>
        <dbReference type="UniProtKB" id="Q2IBD4"/>
    </source>
</evidence>
<evidence type="ECO:0000250" key="3">
    <source>
        <dbReference type="UniProtKB" id="Q8WZ74"/>
    </source>
</evidence>
<evidence type="ECO:0000255" key="4"/>
<evidence type="ECO:0000256" key="5">
    <source>
        <dbReference type="SAM" id="MobiDB-lite"/>
    </source>
</evidence>
<name>CTTB2_RHIFE</name>
<protein>
    <recommendedName>
        <fullName>Cortactin-binding protein 2</fullName>
        <shortName>CortBP2</shortName>
    </recommendedName>
</protein>
<comment type="function">
    <text evidence="2">Regulates the dendritic spine distribution of CTTN/cortactin in hippocampal neurons, and thus controls dendritic spinogenesis and dendritic spine maintenance. Associates with the striatin-interacting phosphatase and kinase (STRIPAK) core complex to regulate dendritic spine distribution of the STRIPAK complex in hippocampal neurons.</text>
</comment>
<comment type="subunit">
    <text evidence="2">Interacts with CTTN/cortactin SH3 domain. Interacts with STRN, STRN4/zinedin and MOB4/phocein; this interactions mediate the association with the STRIPAK core complex and may regulate dendritic spine distribution of the STRIPAK complex in hippocampal neurons. Activation of glutamate receptors weakens the interaction with STRN and STRN4.</text>
</comment>
<comment type="subcellular location">
    <subcellularLocation>
        <location evidence="1">Cytoplasm</location>
        <location evidence="1">Cell cortex</location>
    </subcellularLocation>
    <subcellularLocation>
        <location evidence="2">Cell projection</location>
        <location evidence="2">Dendritic spine</location>
    </subcellularLocation>
    <text evidence="2">Remains associated with dendritic spines even after glutamate stimulation.</text>
</comment>
<reference key="1">
    <citation type="submission" date="2006-01" db="EMBL/GenBank/DDBJ databases">
        <title>NISC comparative sequencing initiative.</title>
        <authorList>
            <person name="Antonellis A."/>
            <person name="Ayele K."/>
            <person name="Benjamin B."/>
            <person name="Blakesley R.W."/>
            <person name="Boakye A."/>
            <person name="Bouffard G.G."/>
            <person name="Brinkley C."/>
            <person name="Brooks S."/>
            <person name="Chu G."/>
            <person name="Coleman H."/>
            <person name="Engle J."/>
            <person name="Gestole M."/>
            <person name="Greene A."/>
            <person name="Guan X."/>
            <person name="Gupta J."/>
            <person name="Haghighi P."/>
            <person name="Han J."/>
            <person name="Hansen N."/>
            <person name="Ho S.-L."/>
            <person name="Hu P."/>
            <person name="Hunter G."/>
            <person name="Hurle B."/>
            <person name="Idol J.R."/>
            <person name="Kwong P."/>
            <person name="Laric P."/>
            <person name="Larson S."/>
            <person name="Lee-Lin S.-Q."/>
            <person name="Legaspi R."/>
            <person name="Madden M."/>
            <person name="Maduro Q.L."/>
            <person name="Maduro V.B."/>
            <person name="Margulies E.H."/>
            <person name="Masiello C."/>
            <person name="Maskeri B."/>
            <person name="McDowell J."/>
            <person name="Mojidi H.A."/>
            <person name="Mullikin J.C."/>
            <person name="Oestreicher J.S."/>
            <person name="Park M."/>
            <person name="Portnoy M.E."/>
            <person name="Prasad A."/>
            <person name="Puri O."/>
            <person name="Reddix-Dugue N."/>
            <person name="Schandler K."/>
            <person name="Schueler M.G."/>
            <person name="Sison C."/>
            <person name="Stantripop S."/>
            <person name="Stephen E."/>
            <person name="Taye A."/>
            <person name="Thomas J.W."/>
            <person name="Thomas P.J."/>
            <person name="Tsipouri V."/>
            <person name="Ung L."/>
            <person name="Vogt J.L."/>
            <person name="Wetherby K.D."/>
            <person name="Young A."/>
            <person name="Green E.D."/>
        </authorList>
    </citation>
    <scope>NUCLEOTIDE SEQUENCE [LARGE SCALE GENOMIC DNA]</scope>
</reference>
<gene>
    <name type="primary">CTTNBP2</name>
    <name type="synonym">CORTBP2</name>
</gene>
<dbReference type="EMBL" id="DP000028">
    <property type="protein sequence ID" value="ABC87481.1"/>
    <property type="molecule type" value="Genomic_DNA"/>
</dbReference>
<dbReference type="SMR" id="Q2IBB2"/>
<dbReference type="FunCoup" id="Q2IBB2">
    <property type="interactions" value="1107"/>
</dbReference>
<dbReference type="InParanoid" id="Q2IBB2"/>
<dbReference type="Proteomes" id="UP000472240">
    <property type="component" value="Unplaced"/>
</dbReference>
<dbReference type="GO" id="GO:0005938">
    <property type="term" value="C:cell cortex"/>
    <property type="evidence" value="ECO:0007669"/>
    <property type="project" value="UniProtKB-SubCell"/>
</dbReference>
<dbReference type="GO" id="GO:0043197">
    <property type="term" value="C:dendritic spine"/>
    <property type="evidence" value="ECO:0000250"/>
    <property type="project" value="UniProtKB"/>
</dbReference>
<dbReference type="GO" id="GO:0090443">
    <property type="term" value="C:FAR/SIN/STRIPAK complex"/>
    <property type="evidence" value="ECO:0000250"/>
    <property type="project" value="UniProtKB"/>
</dbReference>
<dbReference type="CDD" id="cd14686">
    <property type="entry name" value="bZIP"/>
    <property type="match status" value="1"/>
</dbReference>
<dbReference type="Gene3D" id="1.25.40.20">
    <property type="entry name" value="Ankyrin repeat-containing domain"/>
    <property type="match status" value="1"/>
</dbReference>
<dbReference type="InterPro" id="IPR002110">
    <property type="entry name" value="Ankyrin_rpt"/>
</dbReference>
<dbReference type="InterPro" id="IPR036770">
    <property type="entry name" value="Ankyrin_rpt-contain_sf"/>
</dbReference>
<dbReference type="InterPro" id="IPR019131">
    <property type="entry name" value="Cortactin-binding_p2_N"/>
</dbReference>
<dbReference type="PANTHER" id="PTHR24184:SF11">
    <property type="entry name" value="ANKYRIN REPEAT AND SOCS BOX CONTAINING 3"/>
    <property type="match status" value="1"/>
</dbReference>
<dbReference type="PANTHER" id="PTHR24184">
    <property type="entry name" value="SI:CH211-189E2.2"/>
    <property type="match status" value="1"/>
</dbReference>
<dbReference type="Pfam" id="PF25408">
    <property type="entry name" value="AAA_lid_NAV1"/>
    <property type="match status" value="1"/>
</dbReference>
<dbReference type="Pfam" id="PF00023">
    <property type="entry name" value="Ank"/>
    <property type="match status" value="2"/>
</dbReference>
<dbReference type="Pfam" id="PF12796">
    <property type="entry name" value="Ank_2"/>
    <property type="match status" value="1"/>
</dbReference>
<dbReference type="Pfam" id="PF09727">
    <property type="entry name" value="CortBP2"/>
    <property type="match status" value="1"/>
</dbReference>
<dbReference type="SMART" id="SM00248">
    <property type="entry name" value="ANK"/>
    <property type="match status" value="6"/>
</dbReference>
<dbReference type="SUPFAM" id="SSF48403">
    <property type="entry name" value="Ankyrin repeat"/>
    <property type="match status" value="1"/>
</dbReference>
<dbReference type="PROSITE" id="PS50297">
    <property type="entry name" value="ANK_REP_REGION"/>
    <property type="match status" value="1"/>
</dbReference>
<dbReference type="PROSITE" id="PS50088">
    <property type="entry name" value="ANK_REPEAT"/>
    <property type="match status" value="4"/>
</dbReference>
<sequence length="1663" mass="180439">MATDGASCEPDFSRAPEDAAGATAEAAKQDFDVDALSKSELRMLLSVMEGELEARDLVIEALRARRKEVFIQERYGRFNLNDPFLALQRDYEAGAGDKEKKPVCANPLSILEAVMAHCRKMQERMSTQLAAAESRQKKLEMEKLQLQALELEHKKLAARLEEERGKNKHVVLMLVKECKQLSGRVIEEAQKLEDVMAKLDEEKKKTSALEEELSTEKRRSTDMEAQMEKQLSEFDTEREQLRAKLHREEAHTADLKEEIDKMKKMIEQLKRGSDSKPSLSLPRKTKDRRLVSISVGTEGPMTRSVACQTDPVIESTDHVKKLPLTVPVKPSTGSPLVSANAKGNACTSAALVRPGIDRQASHGDLIGSSLPTVPPPSATRVEENGPSTDSAPDLTNSTPPVPSSTAPPAMQTPGAAPQSHSQAPLHSLHSPSANASLHPGLNPRIQAARFRFQGNANDPDQNGNTTQSPPSRDVSPTSRDNLVAKQLARNTVTQALSRFTGPPAGAPPRHGVPPSGDVGTYPPVGRTNVKTPGVARVDRGNPPPIPPKKPGLSQAPSPPHPQLKVVMDSSRAPSAGAKVDNKTVASPPSSLPPGNRVINEENLPKPTTPQLPPKPSIDLTVAPAGCAVSALATSQVGAWPAETPGLNQPACSERSLVIPTTIAFCSSINPVSASSCRAGASDSLLVTASGWSPSLTFLLMSGGPAPLAGRPTLLQQAAAQGNVTLLSMLLNEEGLDINYSCEDGHSALYSAAKNGHTDCVRLLLNAEAQVDAADKNGFTPLCAAAAQGHFKCVELLTAYDADINHTADGGQTPLYLACKNGNKECIKLLLEAGSDRSVKTSDGWTPLHAAVDTGNVDSVKLLMYHSAPARGHFLHEEEPESGVCGLDGGEGSPEGTAKPVVPADLINQADREGWTAAHIAASKGFKNCLEILCRHAGLEPDRREKCNRTVHDVATDDCKHLLENLHAFKIPLRISVGEVQPDIYCSDDFECENTICILNIRKQTSWDDFSKAVSQALTNHFQAISSDGWWSLEDVTCNNTADSSIGLGASSVRSVTLGNVPWSVGQSFAQSPWDFLRKNKAEQVSVLLSGPQEGCLSSVTYASLIPLQVLQNYLRLVEQYHNVIFHGPEGSLQNYIAHQLALCMKHRQIAAGFSCEIVRAQVDASFSKEQLADLFISSACLIPVKQSPVNKKIIIILENLEKSSMSELLGDFLAPLENRSPESPCTFHKGNGTSGCYYFHEHCFLMGTVAKACLQGSDLLVQQHFRWVQLRWDGEPMQSLLPRFLRRRAVNKFRGQVPSPCDPGCKAVDWAAAVWRQLNSCLTRLGTPEALLGPKYFLSCPVIPGHAQVTVKWMCKLWNAVIAPRVQEAILSRASVERHAGFAQTTAKKTPSQGQQAVVKAALSILLNKAVLHGCPLPRAELDQHTADFKGGSFPLSIVSSYNCCSKKKGENGTWRKVSTSPRKKSGHFSSPTWNKPDLNEEGIRNTTTSQLNCNRNASLSKQKSLENDLSSTLTLDQKLYLGSDDEADLIKELQSMCSSKSESDISKIADSRDDLRRFDSSRNNPTFSATVNNLRMPVSEKEVSPLSSHQTTECNDSKSKTESGVSRVKSFLPVPQSKATLCSQNTKRSSSSSNTRQIEINNNSKEEIWNLHKNEQVEKPNK</sequence>
<feature type="chain" id="PRO_0000260415" description="Cortactin-binding protein 2">
    <location>
        <begin position="1"/>
        <end position="1663"/>
    </location>
</feature>
<feature type="repeat" description="ANK 1">
    <location>
        <begin position="709"/>
        <end position="739"/>
    </location>
</feature>
<feature type="repeat" description="ANK 2">
    <location>
        <begin position="743"/>
        <end position="772"/>
    </location>
</feature>
<feature type="repeat" description="ANK 3">
    <location>
        <begin position="776"/>
        <end position="805"/>
    </location>
</feature>
<feature type="repeat" description="ANK 4">
    <location>
        <begin position="809"/>
        <end position="838"/>
    </location>
</feature>
<feature type="repeat" description="ANK 5">
    <location>
        <begin position="842"/>
        <end position="871"/>
    </location>
</feature>
<feature type="repeat" description="ANK 6">
    <location>
        <begin position="912"/>
        <end position="942"/>
    </location>
</feature>
<feature type="region of interest" description="Disordered" evidence="5">
    <location>
        <begin position="1"/>
        <end position="26"/>
    </location>
</feature>
<feature type="region of interest" description="Disordered" evidence="5">
    <location>
        <begin position="203"/>
        <end position="225"/>
    </location>
</feature>
<feature type="region of interest" description="Disordered" evidence="5">
    <location>
        <begin position="359"/>
        <end position="440"/>
    </location>
</feature>
<feature type="region of interest" description="Disordered" evidence="5">
    <location>
        <begin position="454"/>
        <end position="478"/>
    </location>
</feature>
<feature type="region of interest" description="Disordered" evidence="5">
    <location>
        <begin position="497"/>
        <end position="615"/>
    </location>
</feature>
<feature type="region of interest" description="Disordered" evidence="5">
    <location>
        <begin position="1449"/>
        <end position="1490"/>
    </location>
</feature>
<feature type="region of interest" description="Disordered" evidence="5">
    <location>
        <begin position="1579"/>
        <end position="1663"/>
    </location>
</feature>
<feature type="coiled-coil region" evidence="4">
    <location>
        <begin position="119"/>
        <end position="276"/>
    </location>
</feature>
<feature type="compositionally biased region" description="Polar residues" evidence="5">
    <location>
        <begin position="385"/>
        <end position="396"/>
    </location>
</feature>
<feature type="compositionally biased region" description="Polar residues" evidence="5">
    <location>
        <begin position="418"/>
        <end position="435"/>
    </location>
</feature>
<feature type="compositionally biased region" description="Pro residues" evidence="5">
    <location>
        <begin position="606"/>
        <end position="615"/>
    </location>
</feature>
<feature type="compositionally biased region" description="Polar residues" evidence="5">
    <location>
        <begin position="1586"/>
        <end position="1595"/>
    </location>
</feature>
<feature type="compositionally biased region" description="Low complexity" evidence="5">
    <location>
        <begin position="1624"/>
        <end position="1638"/>
    </location>
</feature>
<feature type="compositionally biased region" description="Basic and acidic residues" evidence="5">
    <location>
        <begin position="1645"/>
        <end position="1663"/>
    </location>
</feature>
<feature type="modified residue" description="Asymmetric dimethylarginine" evidence="1">
    <location>
        <position position="498"/>
    </location>
</feature>
<feature type="modified residue" description="Phosphoserine" evidence="3">
    <location>
        <position position="1524"/>
    </location>
</feature>
<organism>
    <name type="scientific">Rhinolophus ferrumequinum</name>
    <name type="common">Greater horseshoe bat</name>
    <dbReference type="NCBI Taxonomy" id="59479"/>
    <lineage>
        <taxon>Eukaryota</taxon>
        <taxon>Metazoa</taxon>
        <taxon>Chordata</taxon>
        <taxon>Craniata</taxon>
        <taxon>Vertebrata</taxon>
        <taxon>Euteleostomi</taxon>
        <taxon>Mammalia</taxon>
        <taxon>Eutheria</taxon>
        <taxon>Laurasiatheria</taxon>
        <taxon>Chiroptera</taxon>
        <taxon>Yinpterochiroptera</taxon>
        <taxon>Rhinolophoidea</taxon>
        <taxon>Rhinolophidae</taxon>
        <taxon>Rhinolophinae</taxon>
        <taxon>Rhinolophus</taxon>
    </lineage>
</organism>
<accession>Q2IBB2</accession>
<keyword id="KW-0040">ANK repeat</keyword>
<keyword id="KW-0966">Cell projection</keyword>
<keyword id="KW-0175">Coiled coil</keyword>
<keyword id="KW-0963">Cytoplasm</keyword>
<keyword id="KW-0488">Methylation</keyword>
<keyword id="KW-0597">Phosphoprotein</keyword>
<keyword id="KW-1185">Reference proteome</keyword>
<keyword id="KW-0677">Repeat</keyword>
<keyword id="KW-0770">Synapse</keyword>